<evidence type="ECO:0000255" key="1">
    <source>
        <dbReference type="HAMAP-Rule" id="MF_00182"/>
    </source>
</evidence>
<accession>Q2T2B1</accession>
<feature type="chain" id="PRO_1000020037" description="Methionyl-tRNA formyltransferase">
    <location>
        <begin position="1"/>
        <end position="328"/>
    </location>
</feature>
<feature type="binding site" evidence="1">
    <location>
        <begin position="121"/>
        <end position="124"/>
    </location>
    <ligand>
        <name>(6S)-5,6,7,8-tetrahydrofolate</name>
        <dbReference type="ChEBI" id="CHEBI:57453"/>
    </ligand>
</feature>
<dbReference type="EC" id="2.1.2.9" evidence="1"/>
<dbReference type="EMBL" id="CP000086">
    <property type="protein sequence ID" value="ABC36524.1"/>
    <property type="molecule type" value="Genomic_DNA"/>
</dbReference>
<dbReference type="RefSeq" id="WP_009893640.1">
    <property type="nucleotide sequence ID" value="NC_007651.1"/>
</dbReference>
<dbReference type="SMR" id="Q2T2B1"/>
<dbReference type="GeneID" id="45119901"/>
<dbReference type="KEGG" id="bte:BTH_I0129"/>
<dbReference type="HOGENOM" id="CLU_033347_1_2_4"/>
<dbReference type="Proteomes" id="UP000001930">
    <property type="component" value="Chromosome I"/>
</dbReference>
<dbReference type="GO" id="GO:0005829">
    <property type="term" value="C:cytosol"/>
    <property type="evidence" value="ECO:0007669"/>
    <property type="project" value="TreeGrafter"/>
</dbReference>
<dbReference type="GO" id="GO:0004479">
    <property type="term" value="F:methionyl-tRNA formyltransferase activity"/>
    <property type="evidence" value="ECO:0007669"/>
    <property type="project" value="UniProtKB-UniRule"/>
</dbReference>
<dbReference type="CDD" id="cd08646">
    <property type="entry name" value="FMT_core_Met-tRNA-FMT_N"/>
    <property type="match status" value="1"/>
</dbReference>
<dbReference type="CDD" id="cd08704">
    <property type="entry name" value="Met_tRNA_FMT_C"/>
    <property type="match status" value="1"/>
</dbReference>
<dbReference type="Gene3D" id="3.10.25.10">
    <property type="entry name" value="Formyl transferase, C-terminal domain"/>
    <property type="match status" value="1"/>
</dbReference>
<dbReference type="Gene3D" id="3.40.50.170">
    <property type="entry name" value="Formyl transferase, N-terminal domain"/>
    <property type="match status" value="1"/>
</dbReference>
<dbReference type="HAMAP" id="MF_00182">
    <property type="entry name" value="Formyl_trans"/>
    <property type="match status" value="1"/>
</dbReference>
<dbReference type="InterPro" id="IPR005794">
    <property type="entry name" value="Fmt"/>
</dbReference>
<dbReference type="InterPro" id="IPR005793">
    <property type="entry name" value="Formyl_trans_C"/>
</dbReference>
<dbReference type="InterPro" id="IPR037022">
    <property type="entry name" value="Formyl_trans_C_sf"/>
</dbReference>
<dbReference type="InterPro" id="IPR002376">
    <property type="entry name" value="Formyl_transf_N"/>
</dbReference>
<dbReference type="InterPro" id="IPR036477">
    <property type="entry name" value="Formyl_transf_N_sf"/>
</dbReference>
<dbReference type="InterPro" id="IPR011034">
    <property type="entry name" value="Formyl_transferase-like_C_sf"/>
</dbReference>
<dbReference type="InterPro" id="IPR001555">
    <property type="entry name" value="GART_AS"/>
</dbReference>
<dbReference type="InterPro" id="IPR044135">
    <property type="entry name" value="Met-tRNA-FMT_C"/>
</dbReference>
<dbReference type="InterPro" id="IPR041711">
    <property type="entry name" value="Met-tRNA-FMT_N"/>
</dbReference>
<dbReference type="NCBIfam" id="TIGR00460">
    <property type="entry name" value="fmt"/>
    <property type="match status" value="1"/>
</dbReference>
<dbReference type="PANTHER" id="PTHR11138">
    <property type="entry name" value="METHIONYL-TRNA FORMYLTRANSFERASE"/>
    <property type="match status" value="1"/>
</dbReference>
<dbReference type="PANTHER" id="PTHR11138:SF5">
    <property type="entry name" value="METHIONYL-TRNA FORMYLTRANSFERASE, MITOCHONDRIAL"/>
    <property type="match status" value="1"/>
</dbReference>
<dbReference type="Pfam" id="PF02911">
    <property type="entry name" value="Formyl_trans_C"/>
    <property type="match status" value="1"/>
</dbReference>
<dbReference type="Pfam" id="PF00551">
    <property type="entry name" value="Formyl_trans_N"/>
    <property type="match status" value="1"/>
</dbReference>
<dbReference type="SUPFAM" id="SSF50486">
    <property type="entry name" value="FMT C-terminal domain-like"/>
    <property type="match status" value="1"/>
</dbReference>
<dbReference type="SUPFAM" id="SSF53328">
    <property type="entry name" value="Formyltransferase"/>
    <property type="match status" value="1"/>
</dbReference>
<dbReference type="PROSITE" id="PS00373">
    <property type="entry name" value="GART"/>
    <property type="match status" value="1"/>
</dbReference>
<organism>
    <name type="scientific">Burkholderia thailandensis (strain ATCC 700388 / DSM 13276 / CCUG 48851 / CIP 106301 / E264)</name>
    <dbReference type="NCBI Taxonomy" id="271848"/>
    <lineage>
        <taxon>Bacteria</taxon>
        <taxon>Pseudomonadati</taxon>
        <taxon>Pseudomonadota</taxon>
        <taxon>Betaproteobacteria</taxon>
        <taxon>Burkholderiales</taxon>
        <taxon>Burkholderiaceae</taxon>
        <taxon>Burkholderia</taxon>
        <taxon>pseudomallei group</taxon>
    </lineage>
</organism>
<protein>
    <recommendedName>
        <fullName evidence="1">Methionyl-tRNA formyltransferase</fullName>
        <ecNumber evidence="1">2.1.2.9</ecNumber>
    </recommendedName>
</protein>
<keyword id="KW-0648">Protein biosynthesis</keyword>
<keyword id="KW-0808">Transferase</keyword>
<reference key="1">
    <citation type="journal article" date="2005" name="BMC Genomics">
        <title>Bacterial genome adaptation to niches: divergence of the potential virulence genes in three Burkholderia species of different survival strategies.</title>
        <authorList>
            <person name="Kim H.S."/>
            <person name="Schell M.A."/>
            <person name="Yu Y."/>
            <person name="Ulrich R.L."/>
            <person name="Sarria S.H."/>
            <person name="Nierman W.C."/>
            <person name="DeShazer D."/>
        </authorList>
    </citation>
    <scope>NUCLEOTIDE SEQUENCE [LARGE SCALE GENOMIC DNA]</scope>
    <source>
        <strain>ATCC 700388 / DSM 13276 / CCUG 48851 / CIP 106301 / E264</strain>
    </source>
</reference>
<sequence length="328" mass="33973">MTHSLRVIFAGTPEFAAAALAAIHEAGFPVPLVLTQPDRPAGRGMKLQASAVKRYALEHGITVAQPPSLRRAGKHPAEAAAALDLLHATPHDVMVVAAYGLLLPQEVLDLPRYGCINIHASLLPRWRGAAPIHRAIEAGDAETGVTLMQMDAGLDTGAMLHDARVAIAPDDTTATLHDKLAAAGATLIVDALVELERAGALAATPQPDDGITYAEKIGKHEAALDWRKPATVLARQVRAFDPFPGGAGTLDGVTLKLWAADAMPARGDAAPGTIVDAGADGVVIACGEGALRVTQLQKPGGKRLPAREFLAGAPLAVGQRFSPPDTAA</sequence>
<name>FMT_BURTA</name>
<proteinExistence type="inferred from homology"/>
<comment type="function">
    <text evidence="1">Attaches a formyl group to the free amino group of methionyl-tRNA(fMet). The formyl group appears to play a dual role in the initiator identity of N-formylmethionyl-tRNA by promoting its recognition by IF2 and preventing the misappropriation of this tRNA by the elongation apparatus.</text>
</comment>
<comment type="catalytic activity">
    <reaction evidence="1">
        <text>L-methionyl-tRNA(fMet) + (6R)-10-formyltetrahydrofolate = N-formyl-L-methionyl-tRNA(fMet) + (6S)-5,6,7,8-tetrahydrofolate + H(+)</text>
        <dbReference type="Rhea" id="RHEA:24380"/>
        <dbReference type="Rhea" id="RHEA-COMP:9952"/>
        <dbReference type="Rhea" id="RHEA-COMP:9953"/>
        <dbReference type="ChEBI" id="CHEBI:15378"/>
        <dbReference type="ChEBI" id="CHEBI:57453"/>
        <dbReference type="ChEBI" id="CHEBI:78530"/>
        <dbReference type="ChEBI" id="CHEBI:78844"/>
        <dbReference type="ChEBI" id="CHEBI:195366"/>
        <dbReference type="EC" id="2.1.2.9"/>
    </reaction>
</comment>
<comment type="similarity">
    <text evidence="1">Belongs to the Fmt family.</text>
</comment>
<gene>
    <name evidence="1" type="primary">fmt</name>
    <name type="ordered locus">BTH_I0129</name>
</gene>